<evidence type="ECO:0000250" key="1">
    <source>
        <dbReference type="UniProtKB" id="P52754"/>
    </source>
</evidence>
<evidence type="ECO:0000255" key="2"/>
<evidence type="ECO:0000269" key="3">
    <source>
    </source>
</evidence>
<evidence type="ECO:0000303" key="4">
    <source>
    </source>
</evidence>
<evidence type="ECO:0000305" key="5"/>
<evidence type="ECO:0000305" key="6">
    <source>
    </source>
</evidence>
<name>HFBB_PENEN</name>
<feature type="signal peptide" evidence="2">
    <location>
        <begin position="1"/>
        <end position="18"/>
    </location>
</feature>
<feature type="chain" id="PRO_5013984663" description="Class I hydrophobin B">
    <location>
        <begin position="19"/>
        <end position="156"/>
    </location>
</feature>
<feature type="disulfide bond" evidence="1">
    <location>
        <begin position="52"/>
        <end position="130"/>
    </location>
</feature>
<feature type="disulfide bond" evidence="1">
    <location>
        <begin position="60"/>
        <end position="124"/>
    </location>
</feature>
<feature type="disulfide bond" evidence="1">
    <location>
        <begin position="61"/>
        <end position="101"/>
    </location>
</feature>
<feature type="disulfide bond" evidence="1">
    <location>
        <begin position="131"/>
        <end position="149"/>
    </location>
</feature>
<keyword id="KW-0134">Cell wall</keyword>
<keyword id="KW-1015">Disulfide bond</keyword>
<keyword id="KW-1185">Reference proteome</keyword>
<keyword id="KW-0964">Secreted</keyword>
<keyword id="KW-0732">Signal</keyword>
<protein>
    <recommendedName>
        <fullName evidence="4">Class I hydrophobin B</fullName>
    </recommendedName>
</protein>
<gene>
    <name evidence="4" type="primary">HfbB</name>
    <name type="ORF">PEX2_098720</name>
</gene>
<organism>
    <name type="scientific">Penicillium expansum</name>
    <name type="common">Blue mold rot fungus</name>
    <dbReference type="NCBI Taxonomy" id="27334"/>
    <lineage>
        <taxon>Eukaryota</taxon>
        <taxon>Fungi</taxon>
        <taxon>Dikarya</taxon>
        <taxon>Ascomycota</taxon>
        <taxon>Pezizomycotina</taxon>
        <taxon>Eurotiomycetes</taxon>
        <taxon>Eurotiomycetidae</taxon>
        <taxon>Eurotiales</taxon>
        <taxon>Aspergillaceae</taxon>
        <taxon>Penicillium</taxon>
    </lineage>
</organism>
<proteinExistence type="evidence at transcript level"/>
<dbReference type="EMBL" id="JQFZ01000160">
    <property type="protein sequence ID" value="KGO56793.1"/>
    <property type="molecule type" value="Genomic_DNA"/>
</dbReference>
<dbReference type="RefSeq" id="XP_016598491.1">
    <property type="nucleotide sequence ID" value="XM_016747142.1"/>
</dbReference>
<dbReference type="GeneID" id="27682562"/>
<dbReference type="VEuPathDB" id="FungiDB:PEXP_020490"/>
<dbReference type="HOGENOM" id="CLU_106380_1_0_1"/>
<dbReference type="OrthoDB" id="4225815at2759"/>
<dbReference type="PhylomeDB" id="A0A0A2JSZ6"/>
<dbReference type="Proteomes" id="UP000030143">
    <property type="component" value="Unassembled WGS sequence"/>
</dbReference>
<dbReference type="GO" id="GO:0005576">
    <property type="term" value="C:extracellular region"/>
    <property type="evidence" value="ECO:0007669"/>
    <property type="project" value="UniProtKB-KW"/>
</dbReference>
<dbReference type="GO" id="GO:0009277">
    <property type="term" value="C:fungal-type cell wall"/>
    <property type="evidence" value="ECO:0007669"/>
    <property type="project" value="InterPro"/>
</dbReference>
<dbReference type="GO" id="GO:0005199">
    <property type="term" value="F:structural constituent of cell wall"/>
    <property type="evidence" value="ECO:0007669"/>
    <property type="project" value="InterPro"/>
</dbReference>
<dbReference type="InterPro" id="IPR001338">
    <property type="entry name" value="Hydrophobin"/>
</dbReference>
<dbReference type="Pfam" id="PF01185">
    <property type="entry name" value="Hydrophobin"/>
    <property type="match status" value="1"/>
</dbReference>
<dbReference type="SMART" id="SM00075">
    <property type="entry name" value="HYDRO"/>
    <property type="match status" value="1"/>
</dbReference>
<comment type="function">
    <text evidence="3 6">Aerial growth, conidiation, and dispersal of filamentous fungi in the environment rely upon a capability of their secreting small amphipathic proteins called hydrophobins (HPBs) with low sequence identity. Class I can self-assemble into an outermost layer of rodlet bundles on aerial cell surfaces, conferring cellular hydrophobicity that supports fungal growth, development and dispersal; whereas Class II form highly ordered films at water-air interfaces through intermolecular interactions but contribute nothing to the rodlet structure (Probable). In P.expansum, hydrophobins contribute to germination, tolerance to cold stress and mycotoxins patulin and citrinin production (PubMed:36374077). HfbA and HfbB are essential for fungal surface hydrophobicity (PubMed:36374077).</text>
</comment>
<comment type="subcellular location">
    <subcellularLocation>
        <location evidence="6">Secreted</location>
    </subcellularLocation>
    <subcellularLocation>
        <location evidence="6">Secreted</location>
        <location evidence="6">Cell wall</location>
    </subcellularLocation>
</comment>
<comment type="induction">
    <text evidence="3">Highly expressed during conidiophore development.</text>
</comment>
<comment type="disruption phenotype">
    <text evidence="3">Leads to the loss of hydrophobicity (PubMed:36374077). Disruption of all 7 hydrophobins leads to altered germination kinetics, decreased survival under exposure to extreme cold stress and increased mycotoxins patulin and citrinin production (PubMed:36374077).</text>
</comment>
<comment type="similarity">
    <text evidence="5">Belongs to the fungal hydrophobin family.</text>
</comment>
<accession>A0A0A2JSZ6</accession>
<sequence length="156" mass="15662">MQFTLSAVVLALAGFSAALPAESMNNGLQHQNGTPRFPVPDSLTIEQAQAKCGDQAQLSCCNKATYAGDTTDINSGILGGTLSNLIGAGSGASGLGLFDQCSKLGAQIPIVIGIPIQDILNQQCKQNIACCANSPSTASGNLVGAALPCVALGSIL</sequence>
<reference key="1">
    <citation type="journal article" date="2015" name="Mol. Plant Microbe Interact.">
        <title>Genome, transcriptome, and functional analyses of Penicillium expansum provide new insights into secondary metabolism and pathogenicity.</title>
        <authorList>
            <person name="Ballester A.R."/>
            <person name="Marcet-Houben M."/>
            <person name="Levin E."/>
            <person name="Sela N."/>
            <person name="Selma-Lazaro C."/>
            <person name="Carmona L."/>
            <person name="Wisniewski M."/>
            <person name="Droby S."/>
            <person name="Gonzalez-Candelas L."/>
            <person name="Gabaldon T."/>
        </authorList>
    </citation>
    <scope>NUCLEOTIDE SEQUENCE [LARGE SCALE GENOMIC DNA]</scope>
    <source>
        <strain>MD-8</strain>
    </source>
</reference>
<reference key="2">
    <citation type="journal article" date="2022" name="MBio">
        <title>The Hydrophobin Gene Family Confers a Fitness Trade-off between Spore Dispersal and Host Colonization in Penicillium expansum.</title>
        <authorList>
            <person name="Luciano-Rosario D."/>
            <person name="Eagan J.L."/>
            <person name="Aryal N."/>
            <person name="Dominguez E.G."/>
            <person name="Hull C.M."/>
            <person name="Keller N.P."/>
        </authorList>
    </citation>
    <scope>FUNCTION</scope>
    <scope>INDUCTION</scope>
    <scope>DISRUPTION PHENOTYPE</scope>
</reference>